<evidence type="ECO:0000255" key="1">
    <source>
        <dbReference type="HAMAP-Rule" id="MF_01227"/>
    </source>
</evidence>
<gene>
    <name evidence="1" type="primary">pyrG</name>
    <name type="ordered locus">MCA2513</name>
</gene>
<protein>
    <recommendedName>
        <fullName evidence="1">CTP synthase</fullName>
        <ecNumber evidence="1">6.3.4.2</ecNumber>
    </recommendedName>
    <alternativeName>
        <fullName evidence="1">Cytidine 5'-triphosphate synthase</fullName>
    </alternativeName>
    <alternativeName>
        <fullName evidence="1">Cytidine triphosphate synthetase</fullName>
        <shortName evidence="1">CTP synthetase</shortName>
        <shortName evidence="1">CTPS</shortName>
    </alternativeName>
    <alternativeName>
        <fullName evidence="1">UTP--ammonia ligase</fullName>
    </alternativeName>
</protein>
<name>PYRG_METCA</name>
<dbReference type="EC" id="6.3.4.2" evidence="1"/>
<dbReference type="EMBL" id="AE017282">
    <property type="protein sequence ID" value="AAU91338.1"/>
    <property type="molecule type" value="Genomic_DNA"/>
</dbReference>
<dbReference type="RefSeq" id="WP_010961734.1">
    <property type="nucleotide sequence ID" value="NC_002977.6"/>
</dbReference>
<dbReference type="SMR" id="Q604M6"/>
<dbReference type="STRING" id="243233.MCA2513"/>
<dbReference type="GeneID" id="88224709"/>
<dbReference type="KEGG" id="mca:MCA2513"/>
<dbReference type="eggNOG" id="COG0504">
    <property type="taxonomic scope" value="Bacteria"/>
</dbReference>
<dbReference type="HOGENOM" id="CLU_011675_5_0_6"/>
<dbReference type="UniPathway" id="UPA00159">
    <property type="reaction ID" value="UER00277"/>
</dbReference>
<dbReference type="Proteomes" id="UP000006821">
    <property type="component" value="Chromosome"/>
</dbReference>
<dbReference type="GO" id="GO:0005829">
    <property type="term" value="C:cytosol"/>
    <property type="evidence" value="ECO:0007669"/>
    <property type="project" value="TreeGrafter"/>
</dbReference>
<dbReference type="GO" id="GO:0005524">
    <property type="term" value="F:ATP binding"/>
    <property type="evidence" value="ECO:0007669"/>
    <property type="project" value="UniProtKB-KW"/>
</dbReference>
<dbReference type="GO" id="GO:0003883">
    <property type="term" value="F:CTP synthase activity"/>
    <property type="evidence" value="ECO:0007669"/>
    <property type="project" value="UniProtKB-UniRule"/>
</dbReference>
<dbReference type="GO" id="GO:0004359">
    <property type="term" value="F:glutaminase activity"/>
    <property type="evidence" value="ECO:0007669"/>
    <property type="project" value="RHEA"/>
</dbReference>
<dbReference type="GO" id="GO:0042802">
    <property type="term" value="F:identical protein binding"/>
    <property type="evidence" value="ECO:0007669"/>
    <property type="project" value="TreeGrafter"/>
</dbReference>
<dbReference type="GO" id="GO:0046872">
    <property type="term" value="F:metal ion binding"/>
    <property type="evidence" value="ECO:0007669"/>
    <property type="project" value="UniProtKB-KW"/>
</dbReference>
<dbReference type="GO" id="GO:0044210">
    <property type="term" value="P:'de novo' CTP biosynthetic process"/>
    <property type="evidence" value="ECO:0007669"/>
    <property type="project" value="UniProtKB-UniRule"/>
</dbReference>
<dbReference type="GO" id="GO:0019856">
    <property type="term" value="P:pyrimidine nucleobase biosynthetic process"/>
    <property type="evidence" value="ECO:0007669"/>
    <property type="project" value="TreeGrafter"/>
</dbReference>
<dbReference type="CDD" id="cd03113">
    <property type="entry name" value="CTPS_N"/>
    <property type="match status" value="1"/>
</dbReference>
<dbReference type="CDD" id="cd01746">
    <property type="entry name" value="GATase1_CTP_Synthase"/>
    <property type="match status" value="1"/>
</dbReference>
<dbReference type="FunFam" id="3.40.50.300:FF:000009">
    <property type="entry name" value="CTP synthase"/>
    <property type="match status" value="1"/>
</dbReference>
<dbReference type="FunFam" id="3.40.50.880:FF:000002">
    <property type="entry name" value="CTP synthase"/>
    <property type="match status" value="1"/>
</dbReference>
<dbReference type="Gene3D" id="3.40.50.880">
    <property type="match status" value="1"/>
</dbReference>
<dbReference type="Gene3D" id="3.40.50.300">
    <property type="entry name" value="P-loop containing nucleotide triphosphate hydrolases"/>
    <property type="match status" value="1"/>
</dbReference>
<dbReference type="HAMAP" id="MF_01227">
    <property type="entry name" value="PyrG"/>
    <property type="match status" value="1"/>
</dbReference>
<dbReference type="InterPro" id="IPR029062">
    <property type="entry name" value="Class_I_gatase-like"/>
</dbReference>
<dbReference type="InterPro" id="IPR004468">
    <property type="entry name" value="CTP_synthase"/>
</dbReference>
<dbReference type="InterPro" id="IPR017456">
    <property type="entry name" value="CTP_synthase_N"/>
</dbReference>
<dbReference type="InterPro" id="IPR017926">
    <property type="entry name" value="GATASE"/>
</dbReference>
<dbReference type="InterPro" id="IPR033828">
    <property type="entry name" value="GATase1_CTP_Synthase"/>
</dbReference>
<dbReference type="InterPro" id="IPR027417">
    <property type="entry name" value="P-loop_NTPase"/>
</dbReference>
<dbReference type="NCBIfam" id="NF003792">
    <property type="entry name" value="PRK05380.1"/>
    <property type="match status" value="1"/>
</dbReference>
<dbReference type="NCBIfam" id="TIGR00337">
    <property type="entry name" value="PyrG"/>
    <property type="match status" value="1"/>
</dbReference>
<dbReference type="PANTHER" id="PTHR11550">
    <property type="entry name" value="CTP SYNTHASE"/>
    <property type="match status" value="1"/>
</dbReference>
<dbReference type="PANTHER" id="PTHR11550:SF0">
    <property type="entry name" value="CTP SYNTHASE-RELATED"/>
    <property type="match status" value="1"/>
</dbReference>
<dbReference type="Pfam" id="PF06418">
    <property type="entry name" value="CTP_synth_N"/>
    <property type="match status" value="1"/>
</dbReference>
<dbReference type="Pfam" id="PF00117">
    <property type="entry name" value="GATase"/>
    <property type="match status" value="1"/>
</dbReference>
<dbReference type="SUPFAM" id="SSF52317">
    <property type="entry name" value="Class I glutamine amidotransferase-like"/>
    <property type="match status" value="1"/>
</dbReference>
<dbReference type="SUPFAM" id="SSF52540">
    <property type="entry name" value="P-loop containing nucleoside triphosphate hydrolases"/>
    <property type="match status" value="1"/>
</dbReference>
<dbReference type="PROSITE" id="PS51273">
    <property type="entry name" value="GATASE_TYPE_1"/>
    <property type="match status" value="1"/>
</dbReference>
<reference key="1">
    <citation type="journal article" date="2004" name="PLoS Biol.">
        <title>Genomic insights into methanotrophy: the complete genome sequence of Methylococcus capsulatus (Bath).</title>
        <authorList>
            <person name="Ward N.L."/>
            <person name="Larsen O."/>
            <person name="Sakwa J."/>
            <person name="Bruseth L."/>
            <person name="Khouri H.M."/>
            <person name="Durkin A.S."/>
            <person name="Dimitrov G."/>
            <person name="Jiang L."/>
            <person name="Scanlan D."/>
            <person name="Kang K.H."/>
            <person name="Lewis M.R."/>
            <person name="Nelson K.E."/>
            <person name="Methe B.A."/>
            <person name="Wu M."/>
            <person name="Heidelberg J.F."/>
            <person name="Paulsen I.T."/>
            <person name="Fouts D.E."/>
            <person name="Ravel J."/>
            <person name="Tettelin H."/>
            <person name="Ren Q."/>
            <person name="Read T.D."/>
            <person name="DeBoy R.T."/>
            <person name="Seshadri R."/>
            <person name="Salzberg S.L."/>
            <person name="Jensen H.B."/>
            <person name="Birkeland N.K."/>
            <person name="Nelson W.C."/>
            <person name="Dodson R.J."/>
            <person name="Grindhaug S.H."/>
            <person name="Holt I.E."/>
            <person name="Eidhammer I."/>
            <person name="Jonasen I."/>
            <person name="Vanaken S."/>
            <person name="Utterback T.R."/>
            <person name="Feldblyum T.V."/>
            <person name="Fraser C.M."/>
            <person name="Lillehaug J.R."/>
            <person name="Eisen J.A."/>
        </authorList>
    </citation>
    <scope>NUCLEOTIDE SEQUENCE [LARGE SCALE GENOMIC DNA]</scope>
    <source>
        <strain>ATCC 33009 / NCIMB 11132 / Bath</strain>
    </source>
</reference>
<organism>
    <name type="scientific">Methylococcus capsulatus (strain ATCC 33009 / NCIMB 11132 / Bath)</name>
    <dbReference type="NCBI Taxonomy" id="243233"/>
    <lineage>
        <taxon>Bacteria</taxon>
        <taxon>Pseudomonadati</taxon>
        <taxon>Pseudomonadota</taxon>
        <taxon>Gammaproteobacteria</taxon>
        <taxon>Methylococcales</taxon>
        <taxon>Methylococcaceae</taxon>
        <taxon>Methylococcus</taxon>
    </lineage>
</organism>
<keyword id="KW-0067">ATP-binding</keyword>
<keyword id="KW-0315">Glutamine amidotransferase</keyword>
<keyword id="KW-0436">Ligase</keyword>
<keyword id="KW-0460">Magnesium</keyword>
<keyword id="KW-0479">Metal-binding</keyword>
<keyword id="KW-0547">Nucleotide-binding</keyword>
<keyword id="KW-0665">Pyrimidine biosynthesis</keyword>
<keyword id="KW-1185">Reference proteome</keyword>
<sequence length="552" mass="60637">MTKYIFITGGVVSSLGKGIAASSLAAILEARGLKVTLTKLDPYINVDPGTMSPFQHGEVFVTEDGAETDLDLGHYERFVRTTMGRANSFTTGQIYENVIRKERRGEYLGATVQVIPHITDEIKRGIRLSAEGYDVALIEIGGTVGDIESLPFLEAIRQMRVDLGEERSLFIHLTLVPYISSAGELKTKPTQHSVKELRTIGIQPDILICRSDRPIPKSECRKIALFTNVQEDAVIASVDADTIYRIPALLHEQQLDEIVVRKLRLDAGPADLSEWHRVVDALQNPERSVTVAMVGKYVNHSDAYKSLSEALVHAGIHTRTRVDIRFIESEEIEDHGTGALEGVDAILVPGGFGERGIEGKIAAVKYAREHRVPYLGICLGMQVAVIEFARNVAGLEGAHSTEFLPSSPHPVIALITEWKTEAGGIEYRSGDSDLGGTMRLGGQKCRLVPNTLAHATYGKDVITERHRHRYEFNNHYLKTLEAAGLRVSGKSLDGRLVEMVEIPEHPWFLACQFHPEFTSTPRGGHPLFSGFVRAARARSEGTSPPESGGAQP</sequence>
<proteinExistence type="inferred from homology"/>
<feature type="chain" id="PRO_0000266154" description="CTP synthase">
    <location>
        <begin position="1"/>
        <end position="552"/>
    </location>
</feature>
<feature type="domain" description="Glutamine amidotransferase type-1" evidence="1">
    <location>
        <begin position="290"/>
        <end position="541"/>
    </location>
</feature>
<feature type="region of interest" description="Amidoligase domain" evidence="1">
    <location>
        <begin position="1"/>
        <end position="265"/>
    </location>
</feature>
<feature type="active site" description="Nucleophile; for glutamine hydrolysis" evidence="1">
    <location>
        <position position="378"/>
    </location>
</feature>
<feature type="active site" evidence="1">
    <location>
        <position position="514"/>
    </location>
</feature>
<feature type="active site" evidence="1">
    <location>
        <position position="516"/>
    </location>
</feature>
<feature type="binding site" evidence="1">
    <location>
        <position position="13"/>
    </location>
    <ligand>
        <name>CTP</name>
        <dbReference type="ChEBI" id="CHEBI:37563"/>
        <note>allosteric inhibitor</note>
    </ligand>
</feature>
<feature type="binding site" evidence="1">
    <location>
        <position position="13"/>
    </location>
    <ligand>
        <name>UTP</name>
        <dbReference type="ChEBI" id="CHEBI:46398"/>
    </ligand>
</feature>
<feature type="binding site" evidence="1">
    <location>
        <begin position="14"/>
        <end position="19"/>
    </location>
    <ligand>
        <name>ATP</name>
        <dbReference type="ChEBI" id="CHEBI:30616"/>
    </ligand>
</feature>
<feature type="binding site" evidence="1">
    <location>
        <position position="71"/>
    </location>
    <ligand>
        <name>ATP</name>
        <dbReference type="ChEBI" id="CHEBI:30616"/>
    </ligand>
</feature>
<feature type="binding site" evidence="1">
    <location>
        <position position="71"/>
    </location>
    <ligand>
        <name>Mg(2+)</name>
        <dbReference type="ChEBI" id="CHEBI:18420"/>
    </ligand>
</feature>
<feature type="binding site" evidence="1">
    <location>
        <position position="139"/>
    </location>
    <ligand>
        <name>Mg(2+)</name>
        <dbReference type="ChEBI" id="CHEBI:18420"/>
    </ligand>
</feature>
<feature type="binding site" evidence="1">
    <location>
        <begin position="146"/>
        <end position="148"/>
    </location>
    <ligand>
        <name>CTP</name>
        <dbReference type="ChEBI" id="CHEBI:37563"/>
        <note>allosteric inhibitor</note>
    </ligand>
</feature>
<feature type="binding site" evidence="1">
    <location>
        <begin position="186"/>
        <end position="191"/>
    </location>
    <ligand>
        <name>CTP</name>
        <dbReference type="ChEBI" id="CHEBI:37563"/>
        <note>allosteric inhibitor</note>
    </ligand>
</feature>
<feature type="binding site" evidence="1">
    <location>
        <begin position="186"/>
        <end position="191"/>
    </location>
    <ligand>
        <name>UTP</name>
        <dbReference type="ChEBI" id="CHEBI:46398"/>
    </ligand>
</feature>
<feature type="binding site" evidence="1">
    <location>
        <position position="222"/>
    </location>
    <ligand>
        <name>CTP</name>
        <dbReference type="ChEBI" id="CHEBI:37563"/>
        <note>allosteric inhibitor</note>
    </ligand>
</feature>
<feature type="binding site" evidence="1">
    <location>
        <position position="222"/>
    </location>
    <ligand>
        <name>UTP</name>
        <dbReference type="ChEBI" id="CHEBI:46398"/>
    </ligand>
</feature>
<feature type="binding site" evidence="1">
    <location>
        <position position="351"/>
    </location>
    <ligand>
        <name>L-glutamine</name>
        <dbReference type="ChEBI" id="CHEBI:58359"/>
    </ligand>
</feature>
<feature type="binding site" evidence="1">
    <location>
        <begin position="379"/>
        <end position="382"/>
    </location>
    <ligand>
        <name>L-glutamine</name>
        <dbReference type="ChEBI" id="CHEBI:58359"/>
    </ligand>
</feature>
<feature type="binding site" evidence="1">
    <location>
        <position position="402"/>
    </location>
    <ligand>
        <name>L-glutamine</name>
        <dbReference type="ChEBI" id="CHEBI:58359"/>
    </ligand>
</feature>
<feature type="binding site" evidence="1">
    <location>
        <position position="469"/>
    </location>
    <ligand>
        <name>L-glutamine</name>
        <dbReference type="ChEBI" id="CHEBI:58359"/>
    </ligand>
</feature>
<accession>Q604M6</accession>
<comment type="function">
    <text evidence="1">Catalyzes the ATP-dependent amination of UTP to CTP with either L-glutamine or ammonia as the source of nitrogen. Regulates intracellular CTP levels through interactions with the four ribonucleotide triphosphates.</text>
</comment>
<comment type="catalytic activity">
    <reaction evidence="1">
        <text>UTP + L-glutamine + ATP + H2O = CTP + L-glutamate + ADP + phosphate + 2 H(+)</text>
        <dbReference type="Rhea" id="RHEA:26426"/>
        <dbReference type="ChEBI" id="CHEBI:15377"/>
        <dbReference type="ChEBI" id="CHEBI:15378"/>
        <dbReference type="ChEBI" id="CHEBI:29985"/>
        <dbReference type="ChEBI" id="CHEBI:30616"/>
        <dbReference type="ChEBI" id="CHEBI:37563"/>
        <dbReference type="ChEBI" id="CHEBI:43474"/>
        <dbReference type="ChEBI" id="CHEBI:46398"/>
        <dbReference type="ChEBI" id="CHEBI:58359"/>
        <dbReference type="ChEBI" id="CHEBI:456216"/>
        <dbReference type="EC" id="6.3.4.2"/>
    </reaction>
</comment>
<comment type="catalytic activity">
    <reaction evidence="1">
        <text>L-glutamine + H2O = L-glutamate + NH4(+)</text>
        <dbReference type="Rhea" id="RHEA:15889"/>
        <dbReference type="ChEBI" id="CHEBI:15377"/>
        <dbReference type="ChEBI" id="CHEBI:28938"/>
        <dbReference type="ChEBI" id="CHEBI:29985"/>
        <dbReference type="ChEBI" id="CHEBI:58359"/>
    </reaction>
</comment>
<comment type="catalytic activity">
    <reaction evidence="1">
        <text>UTP + NH4(+) + ATP = CTP + ADP + phosphate + 2 H(+)</text>
        <dbReference type="Rhea" id="RHEA:16597"/>
        <dbReference type="ChEBI" id="CHEBI:15378"/>
        <dbReference type="ChEBI" id="CHEBI:28938"/>
        <dbReference type="ChEBI" id="CHEBI:30616"/>
        <dbReference type="ChEBI" id="CHEBI:37563"/>
        <dbReference type="ChEBI" id="CHEBI:43474"/>
        <dbReference type="ChEBI" id="CHEBI:46398"/>
        <dbReference type="ChEBI" id="CHEBI:456216"/>
    </reaction>
</comment>
<comment type="activity regulation">
    <text evidence="1">Allosterically activated by GTP, when glutamine is the substrate; GTP has no effect on the reaction when ammonia is the substrate. The allosteric effector GTP functions by stabilizing the protein conformation that binds the tetrahedral intermediate(s) formed during glutamine hydrolysis. Inhibited by the product CTP, via allosteric rather than competitive inhibition.</text>
</comment>
<comment type="pathway">
    <text evidence="1">Pyrimidine metabolism; CTP biosynthesis via de novo pathway; CTP from UDP: step 2/2.</text>
</comment>
<comment type="subunit">
    <text evidence="1">Homotetramer.</text>
</comment>
<comment type="miscellaneous">
    <text evidence="1">CTPSs have evolved a hybrid strategy for distinguishing between UTP and CTP. The overlapping regions of the product feedback inhibitory and substrate sites recognize a common feature in both compounds, the triphosphate moiety. To differentiate isosteric substrate and product pyrimidine rings, an additional pocket far from the expected kinase/ligase catalytic site, specifically recognizes the cytosine and ribose portions of the product inhibitor.</text>
</comment>
<comment type="similarity">
    <text evidence="1">Belongs to the CTP synthase family.</text>
</comment>